<dbReference type="EMBL" id="CP000003">
    <property type="protein sequence ID" value="AAT86462.1"/>
    <property type="molecule type" value="Genomic_DNA"/>
</dbReference>
<dbReference type="RefSeq" id="WP_002985910.1">
    <property type="nucleotide sequence ID" value="NC_006086.1"/>
</dbReference>
<dbReference type="SMR" id="Q5XDQ1"/>
<dbReference type="KEGG" id="spa:M6_Spy0327"/>
<dbReference type="HOGENOM" id="CLU_058671_1_2_9"/>
<dbReference type="Proteomes" id="UP000001167">
    <property type="component" value="Chromosome"/>
</dbReference>
<dbReference type="GO" id="GO:0005886">
    <property type="term" value="C:plasma membrane"/>
    <property type="evidence" value="ECO:0007669"/>
    <property type="project" value="UniProtKB-SubCell"/>
</dbReference>
<dbReference type="CDD" id="cd10432">
    <property type="entry name" value="BI-1-like_bacterial"/>
    <property type="match status" value="1"/>
</dbReference>
<dbReference type="InterPro" id="IPR006214">
    <property type="entry name" value="Bax_inhibitor_1-related"/>
</dbReference>
<dbReference type="PANTHER" id="PTHR23291">
    <property type="entry name" value="BAX INHIBITOR-RELATED"/>
    <property type="match status" value="1"/>
</dbReference>
<dbReference type="PANTHER" id="PTHR23291:SF50">
    <property type="entry name" value="PROTEIN LIFEGUARD 4"/>
    <property type="match status" value="1"/>
</dbReference>
<dbReference type="Pfam" id="PF01027">
    <property type="entry name" value="Bax1-I"/>
    <property type="match status" value="1"/>
</dbReference>
<accession>Q5XDQ1</accession>
<gene>
    <name type="ordered locus">M6_Spy0327</name>
</gene>
<sequence>MNDHVIYTQSDVGLNQFFAKIYSLVGMGVGLSAFVSYLMLYPFRENLISILVNQPMIYYGAAIIELILVFVASGAARKNTPAALPIFLIYSALNGFTLSFIIVAYAQTTVFQAFLSSAAVFFAMSIIGVKTKRDMSGLRKAMFAALIGVVVASLINLFIGSGMMSYVISVISVLIFSGLIASDNQMIKRVYQATNGQVGDGWAVAMALSLYLDFINLFISLLRIFGRND</sequence>
<reference key="1">
    <citation type="journal article" date="2004" name="J. Infect. Dis.">
        <title>Progress toward characterization of the group A Streptococcus metagenome: complete genome sequence of a macrolide-resistant serotype M6 strain.</title>
        <authorList>
            <person name="Banks D.J."/>
            <person name="Porcella S.F."/>
            <person name="Barbian K.D."/>
            <person name="Beres S.B."/>
            <person name="Philips L.E."/>
            <person name="Voyich J.M."/>
            <person name="DeLeo F.R."/>
            <person name="Martin J.M."/>
            <person name="Somerville G.A."/>
            <person name="Musser J.M."/>
        </authorList>
    </citation>
    <scope>NUCLEOTIDE SEQUENCE [LARGE SCALE GENOMIC DNA]</scope>
    <source>
        <strain>ATCC BAA-946 / MGAS10394</strain>
    </source>
</reference>
<protein>
    <recommendedName>
        <fullName>Uncharacterized membrane protein M6_Spy0327</fullName>
    </recommendedName>
</protein>
<evidence type="ECO:0000255" key="1"/>
<evidence type="ECO:0000305" key="2"/>
<proteinExistence type="inferred from homology"/>
<comment type="subcellular location">
    <subcellularLocation>
        <location evidence="2">Cell membrane</location>
        <topology evidence="2">Multi-pass membrane protein</topology>
    </subcellularLocation>
</comment>
<comment type="similarity">
    <text evidence="2">Belongs to the BI1 family.</text>
</comment>
<name>Y327_STRP6</name>
<keyword id="KW-1003">Cell membrane</keyword>
<keyword id="KW-0472">Membrane</keyword>
<keyword id="KW-0812">Transmembrane</keyword>
<keyword id="KW-1133">Transmembrane helix</keyword>
<feature type="chain" id="PRO_0000179115" description="Uncharacterized membrane protein M6_Spy0327">
    <location>
        <begin position="1"/>
        <end position="229"/>
    </location>
</feature>
<feature type="transmembrane region" description="Helical" evidence="1">
    <location>
        <begin position="21"/>
        <end position="41"/>
    </location>
</feature>
<feature type="transmembrane region" description="Helical" evidence="1">
    <location>
        <begin position="56"/>
        <end position="76"/>
    </location>
</feature>
<feature type="transmembrane region" description="Helical" evidence="1">
    <location>
        <begin position="83"/>
        <end position="103"/>
    </location>
</feature>
<feature type="transmembrane region" description="Helical" evidence="1">
    <location>
        <begin position="109"/>
        <end position="129"/>
    </location>
</feature>
<feature type="transmembrane region" description="Helical" evidence="1">
    <location>
        <begin position="141"/>
        <end position="161"/>
    </location>
</feature>
<feature type="transmembrane region" description="Helical" evidence="1">
    <location>
        <begin position="162"/>
        <end position="182"/>
    </location>
</feature>
<feature type="transmembrane region" description="Helical" evidence="1">
    <location>
        <begin position="202"/>
        <end position="222"/>
    </location>
</feature>
<organism>
    <name type="scientific">Streptococcus pyogenes serotype M6 (strain ATCC BAA-946 / MGAS10394)</name>
    <dbReference type="NCBI Taxonomy" id="286636"/>
    <lineage>
        <taxon>Bacteria</taxon>
        <taxon>Bacillati</taxon>
        <taxon>Bacillota</taxon>
        <taxon>Bacilli</taxon>
        <taxon>Lactobacillales</taxon>
        <taxon>Streptococcaceae</taxon>
        <taxon>Streptococcus</taxon>
    </lineage>
</organism>